<keyword id="KW-0004">4Fe-4S</keyword>
<keyword id="KW-0997">Cell inner membrane</keyword>
<keyword id="KW-1003">Cell membrane</keyword>
<keyword id="KW-0408">Iron</keyword>
<keyword id="KW-0411">Iron-sulfur</keyword>
<keyword id="KW-0472">Membrane</keyword>
<keyword id="KW-0479">Metal-binding</keyword>
<keyword id="KW-0520">NAD</keyword>
<keyword id="KW-0874">Quinone</keyword>
<keyword id="KW-1185">Reference proteome</keyword>
<keyword id="KW-1278">Translocase</keyword>
<keyword id="KW-0813">Transport</keyword>
<keyword id="KW-0830">Ubiquinone</keyword>
<reference key="1">
    <citation type="journal article" date="2004" name="Nature">
        <title>Genome sequence of Silicibacter pomeroyi reveals adaptations to the marine environment.</title>
        <authorList>
            <person name="Moran M.A."/>
            <person name="Buchan A."/>
            <person name="Gonzalez J.M."/>
            <person name="Heidelberg J.F."/>
            <person name="Whitman W.B."/>
            <person name="Kiene R.P."/>
            <person name="Henriksen J.R."/>
            <person name="King G.M."/>
            <person name="Belas R."/>
            <person name="Fuqua C."/>
            <person name="Brinkac L.M."/>
            <person name="Lewis M."/>
            <person name="Johri S."/>
            <person name="Weaver B."/>
            <person name="Pai G."/>
            <person name="Eisen J.A."/>
            <person name="Rahe E."/>
            <person name="Sheldon W.M."/>
            <person name="Ye W."/>
            <person name="Miller T.R."/>
            <person name="Carlton J."/>
            <person name="Rasko D.A."/>
            <person name="Paulsen I.T."/>
            <person name="Ren Q."/>
            <person name="Daugherty S.C."/>
            <person name="DeBoy R.T."/>
            <person name="Dodson R.J."/>
            <person name="Durkin A.S."/>
            <person name="Madupu R."/>
            <person name="Nelson W.C."/>
            <person name="Sullivan S.A."/>
            <person name="Rosovitz M.J."/>
            <person name="Haft D.H."/>
            <person name="Selengut J."/>
            <person name="Ward N."/>
        </authorList>
    </citation>
    <scope>NUCLEOTIDE SEQUENCE [LARGE SCALE GENOMIC DNA]</scope>
    <source>
        <strain>ATCC 700808 / DSM 15171 / DSS-3</strain>
    </source>
</reference>
<reference key="2">
    <citation type="journal article" date="2014" name="Stand. Genomic Sci.">
        <title>An updated genome annotation for the model marine bacterium Ruegeria pomeroyi DSS-3.</title>
        <authorList>
            <person name="Rivers A.R."/>
            <person name="Smith C.B."/>
            <person name="Moran M.A."/>
        </authorList>
    </citation>
    <scope>GENOME REANNOTATION</scope>
    <source>
        <strain>ATCC 700808 / DSM 15171 / DSS-3</strain>
    </source>
</reference>
<proteinExistence type="inferred from homology"/>
<organism>
    <name type="scientific">Ruegeria pomeroyi (strain ATCC 700808 / DSM 15171 / DSS-3)</name>
    <name type="common">Silicibacter pomeroyi</name>
    <dbReference type="NCBI Taxonomy" id="246200"/>
    <lineage>
        <taxon>Bacteria</taxon>
        <taxon>Pseudomonadati</taxon>
        <taxon>Pseudomonadota</taxon>
        <taxon>Alphaproteobacteria</taxon>
        <taxon>Rhodobacterales</taxon>
        <taxon>Roseobacteraceae</taxon>
        <taxon>Ruegeria</taxon>
    </lineage>
</organism>
<sequence>MAVMTGANTAGVDKEVATQALNAELQDKGFLLTSTEDIINWARTGSLHWMTFGLACCAVEMMHTSMPRYDAERFGIAPRASPRQSDVMIVAGTLTNKMAPALRKVYDQMPEPRYVISMGSCANGGGYYHYSYSVVRGCDRIVPVDIYVPGCPPTAEALLYGLLQLQRKIRRTGTIVR</sequence>
<protein>
    <recommendedName>
        <fullName evidence="2">NADH-quinone oxidoreductase subunit B</fullName>
        <ecNumber evidence="2">7.1.1.-</ecNumber>
    </recommendedName>
    <alternativeName>
        <fullName evidence="2">NADH dehydrogenase I subunit B</fullName>
    </alternativeName>
    <alternativeName>
        <fullName evidence="2">NDH-1 subunit B</fullName>
    </alternativeName>
</protein>
<gene>
    <name evidence="2" type="primary">nuoB</name>
    <name type="ordered locus">SPO2785</name>
</gene>
<dbReference type="EC" id="7.1.1.-" evidence="2"/>
<dbReference type="EMBL" id="CP000031">
    <property type="protein sequence ID" value="AAV96026.2"/>
    <property type="molecule type" value="Genomic_DNA"/>
</dbReference>
<dbReference type="RefSeq" id="WP_030003237.1">
    <property type="nucleotide sequence ID" value="NC_003911.12"/>
</dbReference>
<dbReference type="SMR" id="Q5LPR4"/>
<dbReference type="STRING" id="246200.SPO2785"/>
<dbReference type="PaxDb" id="246200-SPO2785"/>
<dbReference type="KEGG" id="sil:SPO2785"/>
<dbReference type="eggNOG" id="COG0377">
    <property type="taxonomic scope" value="Bacteria"/>
</dbReference>
<dbReference type="HOGENOM" id="CLU_055737_7_0_5"/>
<dbReference type="Proteomes" id="UP000001023">
    <property type="component" value="Chromosome"/>
</dbReference>
<dbReference type="GO" id="GO:0005886">
    <property type="term" value="C:plasma membrane"/>
    <property type="evidence" value="ECO:0007669"/>
    <property type="project" value="UniProtKB-SubCell"/>
</dbReference>
<dbReference type="GO" id="GO:0045271">
    <property type="term" value="C:respiratory chain complex I"/>
    <property type="evidence" value="ECO:0007669"/>
    <property type="project" value="TreeGrafter"/>
</dbReference>
<dbReference type="GO" id="GO:0051539">
    <property type="term" value="F:4 iron, 4 sulfur cluster binding"/>
    <property type="evidence" value="ECO:0007669"/>
    <property type="project" value="UniProtKB-KW"/>
</dbReference>
<dbReference type="GO" id="GO:0005506">
    <property type="term" value="F:iron ion binding"/>
    <property type="evidence" value="ECO:0007669"/>
    <property type="project" value="UniProtKB-UniRule"/>
</dbReference>
<dbReference type="GO" id="GO:0008137">
    <property type="term" value="F:NADH dehydrogenase (ubiquinone) activity"/>
    <property type="evidence" value="ECO:0007669"/>
    <property type="project" value="InterPro"/>
</dbReference>
<dbReference type="GO" id="GO:0050136">
    <property type="term" value="F:NADH:ubiquinone reductase (non-electrogenic) activity"/>
    <property type="evidence" value="ECO:0007669"/>
    <property type="project" value="UniProtKB-UniRule"/>
</dbReference>
<dbReference type="GO" id="GO:0048038">
    <property type="term" value="F:quinone binding"/>
    <property type="evidence" value="ECO:0007669"/>
    <property type="project" value="UniProtKB-KW"/>
</dbReference>
<dbReference type="GO" id="GO:0009060">
    <property type="term" value="P:aerobic respiration"/>
    <property type="evidence" value="ECO:0007669"/>
    <property type="project" value="TreeGrafter"/>
</dbReference>
<dbReference type="GO" id="GO:0015990">
    <property type="term" value="P:electron transport coupled proton transport"/>
    <property type="evidence" value="ECO:0007669"/>
    <property type="project" value="TreeGrafter"/>
</dbReference>
<dbReference type="FunFam" id="3.40.50.12280:FF:000001">
    <property type="entry name" value="NADH-quinone oxidoreductase subunit B 2"/>
    <property type="match status" value="1"/>
</dbReference>
<dbReference type="Gene3D" id="3.40.50.12280">
    <property type="match status" value="1"/>
</dbReference>
<dbReference type="HAMAP" id="MF_01356">
    <property type="entry name" value="NDH1_NuoB"/>
    <property type="match status" value="1"/>
</dbReference>
<dbReference type="InterPro" id="IPR006137">
    <property type="entry name" value="NADH_UbQ_OxRdtase-like_20kDa"/>
</dbReference>
<dbReference type="InterPro" id="IPR006138">
    <property type="entry name" value="NADH_UQ_OxRdtase_20Kd_su"/>
</dbReference>
<dbReference type="NCBIfam" id="TIGR01957">
    <property type="entry name" value="nuoB_fam"/>
    <property type="match status" value="1"/>
</dbReference>
<dbReference type="NCBIfam" id="NF005012">
    <property type="entry name" value="PRK06411.1"/>
    <property type="match status" value="1"/>
</dbReference>
<dbReference type="PANTHER" id="PTHR11995">
    <property type="entry name" value="NADH DEHYDROGENASE"/>
    <property type="match status" value="1"/>
</dbReference>
<dbReference type="PANTHER" id="PTHR11995:SF14">
    <property type="entry name" value="NADH DEHYDROGENASE [UBIQUINONE] IRON-SULFUR PROTEIN 7, MITOCHONDRIAL"/>
    <property type="match status" value="1"/>
</dbReference>
<dbReference type="Pfam" id="PF01058">
    <property type="entry name" value="Oxidored_q6"/>
    <property type="match status" value="1"/>
</dbReference>
<dbReference type="SUPFAM" id="SSF56770">
    <property type="entry name" value="HydA/Nqo6-like"/>
    <property type="match status" value="1"/>
</dbReference>
<dbReference type="PROSITE" id="PS01150">
    <property type="entry name" value="COMPLEX1_20K"/>
    <property type="match status" value="1"/>
</dbReference>
<name>NUOB_RUEPO</name>
<accession>Q5LPR4</accession>
<comment type="function">
    <text evidence="1">NDH-1 shuttles electrons from NADH, via FMN and iron-sulfur (Fe-S) centers, to quinones in the respiratory chain. Couples the redox reaction to proton translocation (for every two electrons transferred, four hydrogen ions are translocated across the cytoplasmic membrane), and thus conserves the redox energy in a proton gradient (By similarity).</text>
</comment>
<comment type="catalytic activity">
    <reaction evidence="2">
        <text>a quinone + NADH + 5 H(+)(in) = a quinol + NAD(+) + 4 H(+)(out)</text>
        <dbReference type="Rhea" id="RHEA:57888"/>
        <dbReference type="ChEBI" id="CHEBI:15378"/>
        <dbReference type="ChEBI" id="CHEBI:24646"/>
        <dbReference type="ChEBI" id="CHEBI:57540"/>
        <dbReference type="ChEBI" id="CHEBI:57945"/>
        <dbReference type="ChEBI" id="CHEBI:132124"/>
    </reaction>
</comment>
<comment type="cofactor">
    <cofactor evidence="2">
        <name>[4Fe-4S] cluster</name>
        <dbReference type="ChEBI" id="CHEBI:49883"/>
    </cofactor>
    <text evidence="2">Binds 1 [4Fe-4S] cluster.</text>
</comment>
<comment type="subunit">
    <text evidence="2">NDH-1 is composed of 14 different subunits. Subunits NuoB, C, D, E, F, and G constitute the peripheral sector of the complex.</text>
</comment>
<comment type="subcellular location">
    <subcellularLocation>
        <location evidence="2">Cell inner membrane</location>
        <topology evidence="2">Peripheral membrane protein</topology>
        <orientation evidence="2">Cytoplasmic side</orientation>
    </subcellularLocation>
</comment>
<comment type="similarity">
    <text evidence="2">Belongs to the complex I 20 kDa subunit family.</text>
</comment>
<evidence type="ECO:0000250" key="1"/>
<evidence type="ECO:0000255" key="2">
    <source>
        <dbReference type="HAMAP-Rule" id="MF_01356"/>
    </source>
</evidence>
<feature type="chain" id="PRO_0000358479" description="NADH-quinone oxidoreductase subunit B">
    <location>
        <begin position="1"/>
        <end position="177"/>
    </location>
</feature>
<feature type="binding site" evidence="2">
    <location>
        <position position="56"/>
    </location>
    <ligand>
        <name>[4Fe-4S] cluster</name>
        <dbReference type="ChEBI" id="CHEBI:49883"/>
    </ligand>
</feature>
<feature type="binding site" evidence="2">
    <location>
        <position position="57"/>
    </location>
    <ligand>
        <name>[4Fe-4S] cluster</name>
        <dbReference type="ChEBI" id="CHEBI:49883"/>
    </ligand>
</feature>
<feature type="binding site" evidence="2">
    <location>
        <position position="121"/>
    </location>
    <ligand>
        <name>[4Fe-4S] cluster</name>
        <dbReference type="ChEBI" id="CHEBI:49883"/>
    </ligand>
</feature>
<feature type="binding site" evidence="2">
    <location>
        <position position="151"/>
    </location>
    <ligand>
        <name>[4Fe-4S] cluster</name>
        <dbReference type="ChEBI" id="CHEBI:49883"/>
    </ligand>
</feature>